<sequence length="277" mass="31443">MIIELAKNYGFCFGVKRAIKKAEQIKDAATIGPLIHNNEEISRLQKNFNVKTLENIKSLSNETKAIIRTHGITKQDLEELRKKDIEIFDATCPFVTKPQQICEQMSKEGYEIVIFGDENHPEVKGVKSYVNTKAYVVLDKKELQNIKLPSKIAVVSQTTKKPEHFMEIVNFLMLKAKEVRVFNTICDATFKNQDAIKELSLKSDVMVVVGGKNSANTKQLFLIAKTNCEDSYLIETEEELKKEWFLDKKHCGISAGASTPDWIIQKVIAKIENFGIN</sequence>
<feature type="chain" id="PRO_1000021097" description="4-hydroxy-3-methylbut-2-enyl diphosphate reductase">
    <location>
        <begin position="1"/>
        <end position="277"/>
    </location>
</feature>
<feature type="active site" description="Proton donor" evidence="1">
    <location>
        <position position="122"/>
    </location>
</feature>
<feature type="binding site" evidence="1">
    <location>
        <position position="12"/>
    </location>
    <ligand>
        <name>[4Fe-4S] cluster</name>
        <dbReference type="ChEBI" id="CHEBI:49883"/>
    </ligand>
</feature>
<feature type="binding site" evidence="1">
    <location>
        <position position="36"/>
    </location>
    <ligand>
        <name>(2E)-4-hydroxy-3-methylbut-2-enyl diphosphate</name>
        <dbReference type="ChEBI" id="CHEBI:128753"/>
    </ligand>
</feature>
<feature type="binding site" evidence="1">
    <location>
        <position position="36"/>
    </location>
    <ligand>
        <name>dimethylallyl diphosphate</name>
        <dbReference type="ChEBI" id="CHEBI:57623"/>
    </ligand>
</feature>
<feature type="binding site" evidence="1">
    <location>
        <position position="36"/>
    </location>
    <ligand>
        <name>isopentenyl diphosphate</name>
        <dbReference type="ChEBI" id="CHEBI:128769"/>
    </ligand>
</feature>
<feature type="binding site" evidence="1">
    <location>
        <position position="70"/>
    </location>
    <ligand>
        <name>(2E)-4-hydroxy-3-methylbut-2-enyl diphosphate</name>
        <dbReference type="ChEBI" id="CHEBI:128753"/>
    </ligand>
</feature>
<feature type="binding site" evidence="1">
    <location>
        <position position="70"/>
    </location>
    <ligand>
        <name>dimethylallyl diphosphate</name>
        <dbReference type="ChEBI" id="CHEBI:57623"/>
    </ligand>
</feature>
<feature type="binding site" evidence="1">
    <location>
        <position position="70"/>
    </location>
    <ligand>
        <name>isopentenyl diphosphate</name>
        <dbReference type="ChEBI" id="CHEBI:128769"/>
    </ligand>
</feature>
<feature type="binding site" evidence="1">
    <location>
        <position position="92"/>
    </location>
    <ligand>
        <name>[4Fe-4S] cluster</name>
        <dbReference type="ChEBI" id="CHEBI:49883"/>
    </ligand>
</feature>
<feature type="binding site" evidence="1">
    <location>
        <position position="120"/>
    </location>
    <ligand>
        <name>(2E)-4-hydroxy-3-methylbut-2-enyl diphosphate</name>
        <dbReference type="ChEBI" id="CHEBI:128753"/>
    </ligand>
</feature>
<feature type="binding site" evidence="1">
    <location>
        <position position="120"/>
    </location>
    <ligand>
        <name>dimethylallyl diphosphate</name>
        <dbReference type="ChEBI" id="CHEBI:57623"/>
    </ligand>
</feature>
<feature type="binding site" evidence="1">
    <location>
        <position position="120"/>
    </location>
    <ligand>
        <name>isopentenyl diphosphate</name>
        <dbReference type="ChEBI" id="CHEBI:128769"/>
    </ligand>
</feature>
<feature type="binding site" evidence="1">
    <location>
        <position position="158"/>
    </location>
    <ligand>
        <name>(2E)-4-hydroxy-3-methylbut-2-enyl diphosphate</name>
        <dbReference type="ChEBI" id="CHEBI:128753"/>
    </ligand>
</feature>
<feature type="binding site" evidence="1">
    <location>
        <position position="186"/>
    </location>
    <ligand>
        <name>[4Fe-4S] cluster</name>
        <dbReference type="ChEBI" id="CHEBI:49883"/>
    </ligand>
</feature>
<feature type="binding site" evidence="1">
    <location>
        <position position="214"/>
    </location>
    <ligand>
        <name>(2E)-4-hydroxy-3-methylbut-2-enyl diphosphate</name>
        <dbReference type="ChEBI" id="CHEBI:128753"/>
    </ligand>
</feature>
<feature type="binding site" evidence="1">
    <location>
        <position position="214"/>
    </location>
    <ligand>
        <name>dimethylallyl diphosphate</name>
        <dbReference type="ChEBI" id="CHEBI:57623"/>
    </ligand>
</feature>
<feature type="binding site" evidence="1">
    <location>
        <position position="214"/>
    </location>
    <ligand>
        <name>isopentenyl diphosphate</name>
        <dbReference type="ChEBI" id="CHEBI:128769"/>
    </ligand>
</feature>
<feature type="binding site" evidence="1">
    <location>
        <position position="216"/>
    </location>
    <ligand>
        <name>(2E)-4-hydroxy-3-methylbut-2-enyl diphosphate</name>
        <dbReference type="ChEBI" id="CHEBI:128753"/>
    </ligand>
</feature>
<feature type="binding site" evidence="1">
    <location>
        <position position="216"/>
    </location>
    <ligand>
        <name>dimethylallyl diphosphate</name>
        <dbReference type="ChEBI" id="CHEBI:57623"/>
    </ligand>
</feature>
<feature type="binding site" evidence="1">
    <location>
        <position position="216"/>
    </location>
    <ligand>
        <name>isopentenyl diphosphate</name>
        <dbReference type="ChEBI" id="CHEBI:128769"/>
    </ligand>
</feature>
<feature type="binding site" evidence="1">
    <location>
        <position position="258"/>
    </location>
    <ligand>
        <name>(2E)-4-hydroxy-3-methylbut-2-enyl diphosphate</name>
        <dbReference type="ChEBI" id="CHEBI:128753"/>
    </ligand>
</feature>
<feature type="binding site" evidence="1">
    <location>
        <position position="258"/>
    </location>
    <ligand>
        <name>dimethylallyl diphosphate</name>
        <dbReference type="ChEBI" id="CHEBI:57623"/>
    </ligand>
</feature>
<feature type="binding site" evidence="1">
    <location>
        <position position="258"/>
    </location>
    <ligand>
        <name>isopentenyl diphosphate</name>
        <dbReference type="ChEBI" id="CHEBI:128769"/>
    </ligand>
</feature>
<protein>
    <recommendedName>
        <fullName evidence="1">4-hydroxy-3-methylbut-2-enyl diphosphate reductase</fullName>
        <shortName evidence="1">HMBPP reductase</shortName>
        <ecNumber evidence="1">1.17.7.4</ecNumber>
    </recommendedName>
</protein>
<proteinExistence type="inferred from homology"/>
<comment type="function">
    <text evidence="1">Catalyzes the conversion of 1-hydroxy-2-methyl-2-(E)-butenyl 4-diphosphate (HMBPP) into a mixture of isopentenyl diphosphate (IPP) and dimethylallyl diphosphate (DMAPP). Acts in the terminal step of the DOXP/MEP pathway for isoprenoid precursor biosynthesis.</text>
</comment>
<comment type="catalytic activity">
    <reaction evidence="1">
        <text>isopentenyl diphosphate + 2 oxidized [2Fe-2S]-[ferredoxin] + H2O = (2E)-4-hydroxy-3-methylbut-2-enyl diphosphate + 2 reduced [2Fe-2S]-[ferredoxin] + 2 H(+)</text>
        <dbReference type="Rhea" id="RHEA:24488"/>
        <dbReference type="Rhea" id="RHEA-COMP:10000"/>
        <dbReference type="Rhea" id="RHEA-COMP:10001"/>
        <dbReference type="ChEBI" id="CHEBI:15377"/>
        <dbReference type="ChEBI" id="CHEBI:15378"/>
        <dbReference type="ChEBI" id="CHEBI:33737"/>
        <dbReference type="ChEBI" id="CHEBI:33738"/>
        <dbReference type="ChEBI" id="CHEBI:128753"/>
        <dbReference type="ChEBI" id="CHEBI:128769"/>
        <dbReference type="EC" id="1.17.7.4"/>
    </reaction>
</comment>
<comment type="catalytic activity">
    <reaction evidence="1">
        <text>dimethylallyl diphosphate + 2 oxidized [2Fe-2S]-[ferredoxin] + H2O = (2E)-4-hydroxy-3-methylbut-2-enyl diphosphate + 2 reduced [2Fe-2S]-[ferredoxin] + 2 H(+)</text>
        <dbReference type="Rhea" id="RHEA:24825"/>
        <dbReference type="Rhea" id="RHEA-COMP:10000"/>
        <dbReference type="Rhea" id="RHEA-COMP:10001"/>
        <dbReference type="ChEBI" id="CHEBI:15377"/>
        <dbReference type="ChEBI" id="CHEBI:15378"/>
        <dbReference type="ChEBI" id="CHEBI:33737"/>
        <dbReference type="ChEBI" id="CHEBI:33738"/>
        <dbReference type="ChEBI" id="CHEBI:57623"/>
        <dbReference type="ChEBI" id="CHEBI:128753"/>
        <dbReference type="EC" id="1.17.7.4"/>
    </reaction>
</comment>
<comment type="cofactor">
    <cofactor evidence="1">
        <name>[4Fe-4S] cluster</name>
        <dbReference type="ChEBI" id="CHEBI:49883"/>
    </cofactor>
    <text evidence="1">Binds 1 [4Fe-4S] cluster per subunit.</text>
</comment>
<comment type="pathway">
    <text evidence="1">Isoprenoid biosynthesis; dimethylallyl diphosphate biosynthesis; dimethylallyl diphosphate from (2E)-4-hydroxy-3-methylbutenyl diphosphate: step 1/1.</text>
</comment>
<comment type="pathway">
    <text evidence="1">Isoprenoid biosynthesis; isopentenyl diphosphate biosynthesis via DXP pathway; isopentenyl diphosphate from 1-deoxy-D-xylulose 5-phosphate: step 6/6.</text>
</comment>
<comment type="similarity">
    <text evidence="1">Belongs to the IspH family.</text>
</comment>
<reference key="1">
    <citation type="submission" date="2007-07" db="EMBL/GenBank/DDBJ databases">
        <title>Complete genome sequence of Campylobacter jejuni subsp doylei 269.97 isolated from human blood.</title>
        <authorList>
            <person name="Fouts D.E."/>
            <person name="Mongodin E.F."/>
            <person name="Puiu D."/>
            <person name="Sebastian Y."/>
            <person name="Miller W.G."/>
            <person name="Mandrell R.E."/>
            <person name="Lastovica A.J."/>
            <person name="Nelson K.E."/>
        </authorList>
    </citation>
    <scope>NUCLEOTIDE SEQUENCE [LARGE SCALE GENOMIC DNA]</scope>
    <source>
        <strain>ATCC BAA-1458 / RM4099 / 269.97</strain>
    </source>
</reference>
<evidence type="ECO:0000255" key="1">
    <source>
        <dbReference type="HAMAP-Rule" id="MF_00191"/>
    </source>
</evidence>
<gene>
    <name evidence="1" type="primary">ispH</name>
    <name type="ordered locus">JJD26997_0919</name>
</gene>
<keyword id="KW-0004">4Fe-4S</keyword>
<keyword id="KW-0408">Iron</keyword>
<keyword id="KW-0411">Iron-sulfur</keyword>
<keyword id="KW-0414">Isoprene biosynthesis</keyword>
<keyword id="KW-0479">Metal-binding</keyword>
<keyword id="KW-0560">Oxidoreductase</keyword>
<organism>
    <name type="scientific">Campylobacter jejuni subsp. doylei (strain ATCC BAA-1458 / RM4099 / 269.97)</name>
    <dbReference type="NCBI Taxonomy" id="360109"/>
    <lineage>
        <taxon>Bacteria</taxon>
        <taxon>Pseudomonadati</taxon>
        <taxon>Campylobacterota</taxon>
        <taxon>Epsilonproteobacteria</taxon>
        <taxon>Campylobacterales</taxon>
        <taxon>Campylobacteraceae</taxon>
        <taxon>Campylobacter</taxon>
    </lineage>
</organism>
<name>ISPH_CAMJD</name>
<dbReference type="EC" id="1.17.7.4" evidence="1"/>
<dbReference type="EMBL" id="CP000768">
    <property type="protein sequence ID" value="ABS44450.1"/>
    <property type="molecule type" value="Genomic_DNA"/>
</dbReference>
<dbReference type="SMR" id="A7H3F3"/>
<dbReference type="KEGG" id="cjd:JJD26997_0919"/>
<dbReference type="HOGENOM" id="CLU_027486_0_1_7"/>
<dbReference type="UniPathway" id="UPA00056">
    <property type="reaction ID" value="UER00097"/>
</dbReference>
<dbReference type="UniPathway" id="UPA00059">
    <property type="reaction ID" value="UER00105"/>
</dbReference>
<dbReference type="Proteomes" id="UP000002302">
    <property type="component" value="Chromosome"/>
</dbReference>
<dbReference type="GO" id="GO:0051539">
    <property type="term" value="F:4 iron, 4 sulfur cluster binding"/>
    <property type="evidence" value="ECO:0007669"/>
    <property type="project" value="UniProtKB-UniRule"/>
</dbReference>
<dbReference type="GO" id="GO:0051745">
    <property type="term" value="F:4-hydroxy-3-methylbut-2-enyl diphosphate reductase activity"/>
    <property type="evidence" value="ECO:0007669"/>
    <property type="project" value="UniProtKB-UniRule"/>
</dbReference>
<dbReference type="GO" id="GO:0046872">
    <property type="term" value="F:metal ion binding"/>
    <property type="evidence" value="ECO:0007669"/>
    <property type="project" value="UniProtKB-KW"/>
</dbReference>
<dbReference type="GO" id="GO:0050992">
    <property type="term" value="P:dimethylallyl diphosphate biosynthetic process"/>
    <property type="evidence" value="ECO:0007669"/>
    <property type="project" value="UniProtKB-UniRule"/>
</dbReference>
<dbReference type="GO" id="GO:0019288">
    <property type="term" value="P:isopentenyl diphosphate biosynthetic process, methylerythritol 4-phosphate pathway"/>
    <property type="evidence" value="ECO:0007669"/>
    <property type="project" value="UniProtKB-UniRule"/>
</dbReference>
<dbReference type="GO" id="GO:0016114">
    <property type="term" value="P:terpenoid biosynthetic process"/>
    <property type="evidence" value="ECO:0007669"/>
    <property type="project" value="UniProtKB-UniRule"/>
</dbReference>
<dbReference type="CDD" id="cd13944">
    <property type="entry name" value="lytB_ispH"/>
    <property type="match status" value="1"/>
</dbReference>
<dbReference type="Gene3D" id="3.40.50.11270">
    <property type="match status" value="1"/>
</dbReference>
<dbReference type="Gene3D" id="3.40.1010.20">
    <property type="entry name" value="4-hydroxy-3-methylbut-2-enyl diphosphate reductase, catalytic domain"/>
    <property type="match status" value="2"/>
</dbReference>
<dbReference type="HAMAP" id="MF_00191">
    <property type="entry name" value="IspH"/>
    <property type="match status" value="1"/>
</dbReference>
<dbReference type="InterPro" id="IPR003451">
    <property type="entry name" value="LytB/IspH"/>
</dbReference>
<dbReference type="NCBIfam" id="TIGR00216">
    <property type="entry name" value="ispH_lytB"/>
    <property type="match status" value="1"/>
</dbReference>
<dbReference type="NCBIfam" id="NF002187">
    <property type="entry name" value="PRK01045.1-1"/>
    <property type="match status" value="1"/>
</dbReference>
<dbReference type="PANTHER" id="PTHR30426">
    <property type="entry name" value="4-HYDROXY-3-METHYLBUT-2-ENYL DIPHOSPHATE REDUCTASE"/>
    <property type="match status" value="1"/>
</dbReference>
<dbReference type="PANTHER" id="PTHR30426:SF0">
    <property type="entry name" value="4-HYDROXY-3-METHYLBUT-2-ENYL DIPHOSPHATE REDUCTASE"/>
    <property type="match status" value="1"/>
</dbReference>
<dbReference type="Pfam" id="PF02401">
    <property type="entry name" value="LYTB"/>
    <property type="match status" value="1"/>
</dbReference>
<accession>A7H3F3</accession>